<keyword id="KW-1015">Disulfide bond</keyword>
<keyword id="KW-0391">Immunity</keyword>
<keyword id="KW-0393">Immunoglobulin domain</keyword>
<keyword id="KW-0490">MHC I</keyword>
<keyword id="KW-1185">Reference proteome</keyword>
<keyword id="KW-0964">Secreted</keyword>
<keyword id="KW-0732">Signal</keyword>
<accession>Q6QAT4</accession>
<reference key="1">
    <citation type="submission" date="2004-02" db="EMBL/GenBank/DDBJ databases">
        <title>Ovine beta-2 microglobulin.</title>
        <authorList>
            <person name="O'Brien R."/>
            <person name="Berger S."/>
            <person name="Griffin F."/>
        </authorList>
    </citation>
    <scope>NUCLEOTIDE SEQUENCE [MRNA]</scope>
</reference>
<comment type="function">
    <text evidence="1">Component of the class I major histocompatibility complex (MHC). Involved in the presentation of peptide antigens to the immune system (By similarity).</text>
</comment>
<comment type="subunit">
    <text evidence="1">Heterodimer of an alpha chain and a beta chain. Beta-2-microglobulin is the beta-chain of major histocompatibility complex class I molecules (By similarity).</text>
</comment>
<comment type="subcellular location">
    <subcellularLocation>
        <location evidence="1">Secreted</location>
    </subcellularLocation>
</comment>
<comment type="similarity">
    <text evidence="3">Belongs to the beta-2-microglobulin family.</text>
</comment>
<dbReference type="EMBL" id="AY549962">
    <property type="protein sequence ID" value="AAS55471.1"/>
    <property type="molecule type" value="mRNA"/>
</dbReference>
<dbReference type="RefSeq" id="XP_012035994.1">
    <property type="nucleotide sequence ID" value="XM_012180604.3"/>
</dbReference>
<dbReference type="RefSeq" id="XP_012035995.1">
    <property type="nucleotide sequence ID" value="XM_012180605.1"/>
</dbReference>
<dbReference type="SMR" id="Q6QAT4"/>
<dbReference type="STRING" id="9940.ENSOARP00000004039"/>
<dbReference type="PaxDb" id="9940-ENSOARP00000004039"/>
<dbReference type="Ensembl" id="ENSOART00025005215">
    <property type="protein sequence ID" value="ENSOARP00025002386"/>
    <property type="gene ID" value="ENSOARG00025003249"/>
</dbReference>
<dbReference type="Ensembl" id="ENSOART00180013604">
    <property type="protein sequence ID" value="ENSOARP00180007164"/>
    <property type="gene ID" value="ENSOARG00180008218"/>
</dbReference>
<dbReference type="Ensembl" id="ENSOART00215034630">
    <property type="protein sequence ID" value="ENSOARP00215018056"/>
    <property type="gene ID" value="ENSOARG00215020759"/>
</dbReference>
<dbReference type="Ensembl" id="ENSOART00225003834">
    <property type="protein sequence ID" value="ENSOARP00225001555"/>
    <property type="gene ID" value="ENSOARG00225002431"/>
</dbReference>
<dbReference type="Ensembl" id="ENSOART00225003838">
    <property type="protein sequence ID" value="ENSOARP00225001559"/>
    <property type="gene ID" value="ENSOARG00225002432"/>
</dbReference>
<dbReference type="Ensembl" id="ENSOART00260006437">
    <property type="protein sequence ID" value="ENSOARP00260003365"/>
    <property type="gene ID" value="ENSOARG00260003846"/>
</dbReference>
<dbReference type="Ensembl" id="ENSOART00260006453">
    <property type="protein sequence ID" value="ENSOARP00260003370"/>
    <property type="gene ID" value="ENSOARG00260003855"/>
</dbReference>
<dbReference type="GeneID" id="114108604"/>
<dbReference type="KEGG" id="oas:114108604"/>
<dbReference type="KEGG" id="oas:443295"/>
<dbReference type="CTD" id="567"/>
<dbReference type="eggNOG" id="ENOG502S8GM">
    <property type="taxonomic scope" value="Eukaryota"/>
</dbReference>
<dbReference type="HOGENOM" id="CLU_163066_0_0_1"/>
<dbReference type="OMA" id="EDVFSCR"/>
<dbReference type="OrthoDB" id="9949628at2759"/>
<dbReference type="Proteomes" id="UP000002356">
    <property type="component" value="Chromosome 7"/>
</dbReference>
<dbReference type="Bgee" id="ENSOARG00000003782">
    <property type="expression patterns" value="Expressed in leukocyte and 52 other cell types or tissues"/>
</dbReference>
<dbReference type="ExpressionAtlas" id="Q6QAT4">
    <property type="expression patterns" value="baseline"/>
</dbReference>
<dbReference type="GO" id="GO:0005576">
    <property type="term" value="C:extracellular region"/>
    <property type="evidence" value="ECO:0007669"/>
    <property type="project" value="UniProtKB-SubCell"/>
</dbReference>
<dbReference type="GO" id="GO:0042612">
    <property type="term" value="C:MHC class I protein complex"/>
    <property type="evidence" value="ECO:0007669"/>
    <property type="project" value="UniProtKB-KW"/>
</dbReference>
<dbReference type="GO" id="GO:0002474">
    <property type="term" value="P:antigen processing and presentation of peptide antigen via MHC class I"/>
    <property type="evidence" value="ECO:0007669"/>
    <property type="project" value="UniProtKB-KW"/>
</dbReference>
<dbReference type="GO" id="GO:0006955">
    <property type="term" value="P:immune response"/>
    <property type="evidence" value="ECO:0007669"/>
    <property type="project" value="InterPro"/>
</dbReference>
<dbReference type="CDD" id="cd05770">
    <property type="entry name" value="IgC1_beta2m"/>
    <property type="match status" value="1"/>
</dbReference>
<dbReference type="FunFam" id="2.60.40.10:FF:001005">
    <property type="entry name" value="Beta-2-microglobulin"/>
    <property type="match status" value="1"/>
</dbReference>
<dbReference type="Gene3D" id="2.60.40.10">
    <property type="entry name" value="Immunoglobulins"/>
    <property type="match status" value="1"/>
</dbReference>
<dbReference type="InterPro" id="IPR015707">
    <property type="entry name" value="B2Microglobulin"/>
</dbReference>
<dbReference type="InterPro" id="IPR007110">
    <property type="entry name" value="Ig-like_dom"/>
</dbReference>
<dbReference type="InterPro" id="IPR036179">
    <property type="entry name" value="Ig-like_dom_sf"/>
</dbReference>
<dbReference type="InterPro" id="IPR013783">
    <property type="entry name" value="Ig-like_fold"/>
</dbReference>
<dbReference type="InterPro" id="IPR003006">
    <property type="entry name" value="Ig/MHC_CS"/>
</dbReference>
<dbReference type="InterPro" id="IPR003597">
    <property type="entry name" value="Ig_C1-set"/>
</dbReference>
<dbReference type="InterPro" id="IPR050160">
    <property type="entry name" value="MHC/Immunoglobulin"/>
</dbReference>
<dbReference type="PANTHER" id="PTHR19944:SF62">
    <property type="entry name" value="BETA-2-MICROGLOBULIN"/>
    <property type="match status" value="1"/>
</dbReference>
<dbReference type="PANTHER" id="PTHR19944">
    <property type="entry name" value="MHC CLASS II-RELATED"/>
    <property type="match status" value="1"/>
</dbReference>
<dbReference type="Pfam" id="PF07654">
    <property type="entry name" value="C1-set"/>
    <property type="match status" value="1"/>
</dbReference>
<dbReference type="SMART" id="SM00407">
    <property type="entry name" value="IGc1"/>
    <property type="match status" value="1"/>
</dbReference>
<dbReference type="SUPFAM" id="SSF48726">
    <property type="entry name" value="Immunoglobulin"/>
    <property type="match status" value="1"/>
</dbReference>
<dbReference type="PROSITE" id="PS50835">
    <property type="entry name" value="IG_LIKE"/>
    <property type="match status" value="1"/>
</dbReference>
<dbReference type="PROSITE" id="PS00290">
    <property type="entry name" value="IG_MHC"/>
    <property type="match status" value="1"/>
</dbReference>
<organism>
    <name type="scientific">Ovis aries</name>
    <name type="common">Sheep</name>
    <dbReference type="NCBI Taxonomy" id="9940"/>
    <lineage>
        <taxon>Eukaryota</taxon>
        <taxon>Metazoa</taxon>
        <taxon>Chordata</taxon>
        <taxon>Craniata</taxon>
        <taxon>Vertebrata</taxon>
        <taxon>Euteleostomi</taxon>
        <taxon>Mammalia</taxon>
        <taxon>Eutheria</taxon>
        <taxon>Laurasiatheria</taxon>
        <taxon>Artiodactyla</taxon>
        <taxon>Ruminantia</taxon>
        <taxon>Pecora</taxon>
        <taxon>Bovidae</taxon>
        <taxon>Caprinae</taxon>
        <taxon>Ovis</taxon>
    </lineage>
</organism>
<name>B2MG_SHEEP</name>
<evidence type="ECO:0000250" key="1"/>
<evidence type="ECO:0000255" key="2">
    <source>
        <dbReference type="PROSITE-ProRule" id="PRU00114"/>
    </source>
</evidence>
<evidence type="ECO:0000305" key="3"/>
<proteinExistence type="inferred from homology"/>
<protein>
    <recommendedName>
        <fullName>Beta-2-microglobulin</fullName>
    </recommendedName>
</protein>
<feature type="signal peptide" evidence="1">
    <location>
        <begin position="1"/>
        <end position="20"/>
    </location>
</feature>
<feature type="chain" id="PRO_0000041825" description="Beta-2-microglobulin">
    <location>
        <begin position="21"/>
        <end position="118"/>
    </location>
</feature>
<feature type="domain" description="Ig-like C1-type">
    <location>
        <begin position="25"/>
        <end position="112"/>
    </location>
</feature>
<feature type="disulfide bond" evidence="2">
    <location>
        <begin position="45"/>
        <end position="99"/>
    </location>
</feature>
<sequence length="118" mass="13464">MAVSAALVLLGLLSLSGLDAIQRIPEVQVYSRHPPEDGKPNYLNCYVYGFHPPQIEIDLLKNGEKIKSEQSDLSFSKDWSFYLLSHAEFTPNSKDQYSCRVNHVTLTQPKIVKWDRDL</sequence>
<gene>
    <name type="primary">B2M</name>
</gene>